<proteinExistence type="inferred from homology"/>
<keyword id="KW-0012">Acyltransferase</keyword>
<keyword id="KW-0808">Transferase</keyword>
<feature type="chain" id="PRO_0000179153" description="Phosphate butyryltransferase">
    <location>
        <begin position="1"/>
        <end position="302"/>
    </location>
</feature>
<comment type="function">
    <text>Catalyzes the conversion of butyryl-CoA through butyryl phosphate to butyrate.</text>
</comment>
<comment type="catalytic activity">
    <reaction>
        <text>butanoyl-CoA + phosphate = butanoyl phosphate + CoA</text>
        <dbReference type="Rhea" id="RHEA:20892"/>
        <dbReference type="ChEBI" id="CHEBI:43474"/>
        <dbReference type="ChEBI" id="CHEBI:57287"/>
        <dbReference type="ChEBI" id="CHEBI:57371"/>
        <dbReference type="ChEBI" id="CHEBI:58079"/>
        <dbReference type="EC" id="2.3.1.19"/>
    </reaction>
</comment>
<comment type="pathway">
    <text>Lipid metabolism; butanoate metabolism.</text>
</comment>
<comment type="similarity">
    <text evidence="1">Belongs to the phosphate acetyltransferase and butyryltransferase family.</text>
</comment>
<protein>
    <recommendedName>
        <fullName>Phosphate butyryltransferase</fullName>
        <ecNumber>2.3.1.19</ecNumber>
    </recommendedName>
    <alternativeName>
        <fullName>Phosphotransbutyrylase</fullName>
    </alternativeName>
</protein>
<name>PTB_CLOB8</name>
<reference key="1">
    <citation type="journal article" date="1993" name="Gene">
        <title>Cloning and sequence analysis of the genes encoding phosphotransbutyrylase and butyrate kinase from Clostridium acetobutylicum NCIMB 8052.</title>
        <authorList>
            <person name="Oultram J.D."/>
            <person name="Burr I.D."/>
            <person name="Elmore M.J."/>
            <person name="Minton N.P."/>
        </authorList>
    </citation>
    <scope>NUCLEOTIDE SEQUENCE [GENOMIC DNA]</scope>
</reference>
<reference key="2">
    <citation type="submission" date="2007-06" db="EMBL/GenBank/DDBJ databases">
        <title>Complete sequence of Clostridium beijerinckii NCIMB 8052.</title>
        <authorList>
            <consortium name="US DOE Joint Genome Institute"/>
            <person name="Copeland A."/>
            <person name="Lucas S."/>
            <person name="Lapidus A."/>
            <person name="Barry K."/>
            <person name="Detter J.C."/>
            <person name="Glavina del Rio T."/>
            <person name="Hammon N."/>
            <person name="Israni S."/>
            <person name="Dalin E."/>
            <person name="Tice H."/>
            <person name="Pitluck S."/>
            <person name="Sims D."/>
            <person name="Brettin T."/>
            <person name="Bruce D."/>
            <person name="Tapia R."/>
            <person name="Brainard J."/>
            <person name="Schmutz J."/>
            <person name="Larimer F."/>
            <person name="Land M."/>
            <person name="Hauser L."/>
            <person name="Kyrpides N."/>
            <person name="Mikhailova N."/>
            <person name="Bennet G."/>
            <person name="Cann I."/>
            <person name="Chen J.-S."/>
            <person name="Contreras A.L."/>
            <person name="Jones D."/>
            <person name="Kashket E."/>
            <person name="Mitchell W."/>
            <person name="Stoddard S."/>
            <person name="Schwarz W."/>
            <person name="Qureshi N."/>
            <person name="Young M."/>
            <person name="Shi Z."/>
            <person name="Ezeji T."/>
            <person name="White B."/>
            <person name="Blaschek H."/>
            <person name="Richardson P."/>
        </authorList>
    </citation>
    <scope>NUCLEOTIDE SEQUENCE [LARGE SCALE GENOMIC DNA]</scope>
    <source>
        <strain>ATCC 51743 / NCIMB 8052</strain>
    </source>
</reference>
<organism>
    <name type="scientific">Clostridium beijerinckii (strain ATCC 51743 / NCIMB 8052)</name>
    <name type="common">Clostridium acetobutylicum</name>
    <dbReference type="NCBI Taxonomy" id="290402"/>
    <lineage>
        <taxon>Bacteria</taxon>
        <taxon>Bacillati</taxon>
        <taxon>Bacillota</taxon>
        <taxon>Clostridia</taxon>
        <taxon>Eubacteriales</taxon>
        <taxon>Clostridiaceae</taxon>
        <taxon>Clostridium</taxon>
    </lineage>
</organism>
<sequence length="302" mass="32442">MSKNFDELLSRLKEVPTKKVAVAVAQDEPVLEAIKEATENNIAQAILVGDKQQIHEIAKKINLDLSDYEIMDIKDPKKATLEAVKLVSSGHADMLMKGLVDTATFLRSVLNKEVGLRTGKLMSHVAVFDVEGWDRLLFLTDAAFNTYPEFKDKVGMINNAVVVAHACGIDVPRVAPICPVEVVNTSMQSTVDAALLAKMSDRGQIKGCVIDGPFALDNAISEEAAHHKGVTGSVAGKADILLLPNIEAANVMYKTLTYFSKSRNGGLLVGTSAPVILTSRADSFETKVNSIALAALVAARNK</sequence>
<dbReference type="EC" id="2.3.1.19"/>
<dbReference type="EMBL" id="L04468">
    <property type="protein sequence ID" value="AAA52080.1"/>
    <property type="molecule type" value="Genomic_DNA"/>
</dbReference>
<dbReference type="EMBL" id="CP000721">
    <property type="protein sequence ID" value="ABR32393.1"/>
    <property type="molecule type" value="Genomic_DNA"/>
</dbReference>
<dbReference type="SMR" id="Q05624"/>
<dbReference type="KEGG" id="cbe:Cbei_0203"/>
<dbReference type="eggNOG" id="COG0280">
    <property type="taxonomic scope" value="Bacteria"/>
</dbReference>
<dbReference type="HOGENOM" id="CLU_056531_0_0_9"/>
<dbReference type="UniPathway" id="UPA00863"/>
<dbReference type="Proteomes" id="UP000000565">
    <property type="component" value="Chromosome"/>
</dbReference>
<dbReference type="GO" id="GO:0050182">
    <property type="term" value="F:phosphate butyryltransferase activity"/>
    <property type="evidence" value="ECO:0000314"/>
    <property type="project" value="CACAO"/>
</dbReference>
<dbReference type="GO" id="GO:0019605">
    <property type="term" value="P:butyrate metabolic process"/>
    <property type="evidence" value="ECO:0007669"/>
    <property type="project" value="UniProtKB-UniPathway"/>
</dbReference>
<dbReference type="FunFam" id="3.40.718.10:FF:000015">
    <property type="entry name" value="Phosphate butyryltransferase"/>
    <property type="match status" value="1"/>
</dbReference>
<dbReference type="Gene3D" id="3.40.718.10">
    <property type="entry name" value="Isopropylmalate Dehydrogenase"/>
    <property type="match status" value="1"/>
</dbReference>
<dbReference type="InterPro" id="IPR012147">
    <property type="entry name" value="P_Ac_Bu_trans"/>
</dbReference>
<dbReference type="InterPro" id="IPR050500">
    <property type="entry name" value="Phos_Acetyltrans/Butyryltrans"/>
</dbReference>
<dbReference type="InterPro" id="IPR014079">
    <property type="entry name" value="Phosphate_butyryltransferase"/>
</dbReference>
<dbReference type="InterPro" id="IPR002505">
    <property type="entry name" value="PTA_PTB"/>
</dbReference>
<dbReference type="NCBIfam" id="TIGR02706">
    <property type="entry name" value="P_butyryltrans"/>
    <property type="match status" value="1"/>
</dbReference>
<dbReference type="NCBIfam" id="NF004472">
    <property type="entry name" value="PRK05805.1"/>
    <property type="match status" value="1"/>
</dbReference>
<dbReference type="NCBIfam" id="NF006045">
    <property type="entry name" value="PRK08190.1"/>
    <property type="match status" value="1"/>
</dbReference>
<dbReference type="PANTHER" id="PTHR43356">
    <property type="entry name" value="PHOSPHATE ACETYLTRANSFERASE"/>
    <property type="match status" value="1"/>
</dbReference>
<dbReference type="PANTHER" id="PTHR43356:SF2">
    <property type="entry name" value="PHOSPHATE ACETYLTRANSFERASE"/>
    <property type="match status" value="1"/>
</dbReference>
<dbReference type="Pfam" id="PF01515">
    <property type="entry name" value="PTA_PTB"/>
    <property type="match status" value="2"/>
</dbReference>
<dbReference type="PIRSF" id="PIRSF000428">
    <property type="entry name" value="P_Ac_trans"/>
    <property type="match status" value="1"/>
</dbReference>
<dbReference type="SUPFAM" id="SSF53659">
    <property type="entry name" value="Isocitrate/Isopropylmalate dehydrogenase-like"/>
    <property type="match status" value="1"/>
</dbReference>
<gene>
    <name type="primary">ptb</name>
    <name type="ordered locus">Cbei_0203</name>
</gene>
<accession>Q05624</accession>
<accession>A6LPW3</accession>
<evidence type="ECO:0000305" key="1"/>